<keyword id="KW-0002">3D-structure</keyword>
<keyword id="KW-0067">ATP-binding</keyword>
<keyword id="KW-0436">Ligase</keyword>
<keyword id="KW-0547">Nucleotide-binding</keyword>
<keyword id="KW-0648">Protein biosynthesis</keyword>
<name>GATE_PYRAB</name>
<evidence type="ECO:0000255" key="1">
    <source>
        <dbReference type="HAMAP-Rule" id="MF_00588"/>
    </source>
</evidence>
<evidence type="ECO:0000256" key="2">
    <source>
        <dbReference type="SAM" id="MobiDB-lite"/>
    </source>
</evidence>
<evidence type="ECO:0000305" key="3"/>
<evidence type="ECO:0007829" key="4">
    <source>
        <dbReference type="PDB" id="1ZQ1"/>
    </source>
</evidence>
<accession>Q9V0U0</accession>
<accession>G8ZJG3</accession>
<reference key="1">
    <citation type="journal article" date="2003" name="Mol. Microbiol.">
        <title>An integrated analysis of the genome of the hyperthermophilic archaeon Pyrococcus abyssi.</title>
        <authorList>
            <person name="Cohen G.N."/>
            <person name="Barbe V."/>
            <person name="Flament D."/>
            <person name="Galperin M."/>
            <person name="Heilig R."/>
            <person name="Lecompte O."/>
            <person name="Poch O."/>
            <person name="Prieur D."/>
            <person name="Querellou J."/>
            <person name="Ripp R."/>
            <person name="Thierry J.-C."/>
            <person name="Van der Oost J."/>
            <person name="Weissenbach J."/>
            <person name="Zivanovic Y."/>
            <person name="Forterre P."/>
        </authorList>
    </citation>
    <scope>NUCLEOTIDE SEQUENCE [LARGE SCALE GENOMIC DNA]</scope>
    <source>
        <strain>GE5 / Orsay</strain>
    </source>
</reference>
<reference key="2">
    <citation type="journal article" date="2012" name="Curr. Microbiol.">
        <title>Re-annotation of two hyperthermophilic archaea Pyrococcus abyssi GE5 and Pyrococcus furiosus DSM 3638.</title>
        <authorList>
            <person name="Gao J."/>
            <person name="Wang J."/>
        </authorList>
    </citation>
    <scope>GENOME REANNOTATION</scope>
    <source>
        <strain>GE5 / Orsay</strain>
    </source>
</reference>
<dbReference type="EC" id="6.3.5.-" evidence="1"/>
<dbReference type="EMBL" id="AJ248285">
    <property type="protein sequence ID" value="CAB49613.1"/>
    <property type="molecule type" value="Genomic_DNA"/>
</dbReference>
<dbReference type="EMBL" id="HE613800">
    <property type="protein sequence ID" value="CCE70090.1"/>
    <property type="status" value="ALT_INIT"/>
    <property type="molecule type" value="Genomic_DNA"/>
</dbReference>
<dbReference type="PIR" id="D75112">
    <property type="entry name" value="D75112"/>
</dbReference>
<dbReference type="RefSeq" id="WP_048146615.1">
    <property type="nucleotide sequence ID" value="NC_000868.1"/>
</dbReference>
<dbReference type="PDB" id="1ZQ1">
    <property type="method" value="X-ray"/>
    <property type="resolution" value="3.00 A"/>
    <property type="chains" value="C/D=1-633"/>
</dbReference>
<dbReference type="PDBsum" id="1ZQ1"/>
<dbReference type="SMR" id="Q9V0U0"/>
<dbReference type="DIP" id="DIP-48454N"/>
<dbReference type="IntAct" id="Q9V0U0">
    <property type="interactions" value="1"/>
</dbReference>
<dbReference type="STRING" id="272844.PAB1902"/>
<dbReference type="KEGG" id="pab:PAB1902"/>
<dbReference type="PATRIC" id="fig|272844.11.peg.734"/>
<dbReference type="eggNOG" id="arCOG01719">
    <property type="taxonomic scope" value="Archaea"/>
</dbReference>
<dbReference type="HOGENOM" id="CLU_030702_0_0_2"/>
<dbReference type="OrthoDB" id="7316at2157"/>
<dbReference type="PhylomeDB" id="Q9V0U0"/>
<dbReference type="EvolutionaryTrace" id="Q9V0U0"/>
<dbReference type="Proteomes" id="UP000000810">
    <property type="component" value="Chromosome"/>
</dbReference>
<dbReference type="Proteomes" id="UP000009139">
    <property type="component" value="Chromosome"/>
</dbReference>
<dbReference type="GO" id="GO:0005737">
    <property type="term" value="C:cytoplasm"/>
    <property type="evidence" value="ECO:0007669"/>
    <property type="project" value="InterPro"/>
</dbReference>
<dbReference type="GO" id="GO:0004812">
    <property type="term" value="F:aminoacyl-tRNA ligase activity"/>
    <property type="evidence" value="ECO:0007669"/>
    <property type="project" value="InterPro"/>
</dbReference>
<dbReference type="GO" id="GO:0005524">
    <property type="term" value="F:ATP binding"/>
    <property type="evidence" value="ECO:0007669"/>
    <property type="project" value="UniProtKB-KW"/>
</dbReference>
<dbReference type="GO" id="GO:0050567">
    <property type="term" value="F:glutaminyl-tRNA synthase (glutamine-hydrolyzing) activity"/>
    <property type="evidence" value="ECO:0007669"/>
    <property type="project" value="UniProtKB-UniRule"/>
</dbReference>
<dbReference type="GO" id="GO:0070681">
    <property type="term" value="P:glutaminyl-tRNAGln biosynthesis via transamidation"/>
    <property type="evidence" value="ECO:0007669"/>
    <property type="project" value="TreeGrafter"/>
</dbReference>
<dbReference type="GO" id="GO:0006412">
    <property type="term" value="P:translation"/>
    <property type="evidence" value="ECO:0007669"/>
    <property type="project" value="UniProtKB-UniRule"/>
</dbReference>
<dbReference type="FunFam" id="1.10.10.410:FF:000003">
    <property type="entry name" value="Glutamyl-tRNA(Gln) amidotransferase subunit E"/>
    <property type="match status" value="1"/>
</dbReference>
<dbReference type="FunFam" id="1.10.150.380:FF:000002">
    <property type="entry name" value="Glutamyl-tRNA(Gln) amidotransferase subunit E"/>
    <property type="match status" value="1"/>
</dbReference>
<dbReference type="FunFam" id="3.30.1360.30:FF:000003">
    <property type="entry name" value="Glutamyl-tRNA(Gln) amidotransferase subunit E"/>
    <property type="match status" value="1"/>
</dbReference>
<dbReference type="Gene3D" id="1.10.10.410">
    <property type="match status" value="1"/>
</dbReference>
<dbReference type="Gene3D" id="3.30.1360.30">
    <property type="entry name" value="GAD-like domain"/>
    <property type="match status" value="1"/>
</dbReference>
<dbReference type="Gene3D" id="1.10.150.380">
    <property type="entry name" value="GatB domain, N-terminal subdomain"/>
    <property type="match status" value="1"/>
</dbReference>
<dbReference type="HAMAP" id="MF_00588">
    <property type="entry name" value="GatE"/>
    <property type="match status" value="1"/>
</dbReference>
<dbReference type="InterPro" id="IPR017959">
    <property type="entry name" value="Asn/Gln-tRNA_amidoTrfase_suB/E"/>
</dbReference>
<dbReference type="InterPro" id="IPR006075">
    <property type="entry name" value="Asn/Gln-tRNA_Trfase_suB/E_cat"/>
</dbReference>
<dbReference type="InterPro" id="IPR018027">
    <property type="entry name" value="Asn/Gln_amidotransferase"/>
</dbReference>
<dbReference type="InterPro" id="IPR003789">
    <property type="entry name" value="Asn/Gln_tRNA_amidoTrase-B-like"/>
</dbReference>
<dbReference type="InterPro" id="IPR004115">
    <property type="entry name" value="GAD-like_sf"/>
</dbReference>
<dbReference type="InterPro" id="IPR029351">
    <property type="entry name" value="GAD_dom"/>
</dbReference>
<dbReference type="InterPro" id="IPR042114">
    <property type="entry name" value="GatB_C_1"/>
</dbReference>
<dbReference type="InterPro" id="IPR023168">
    <property type="entry name" value="GatB_Yqey_C_2"/>
</dbReference>
<dbReference type="InterPro" id="IPR004414">
    <property type="entry name" value="GatE"/>
</dbReference>
<dbReference type="InterPro" id="IPR017958">
    <property type="entry name" value="Gln-tRNA_amidoTrfase_suB_CS"/>
</dbReference>
<dbReference type="InterPro" id="IPR014746">
    <property type="entry name" value="Gln_synth/guanido_kin_cat_dom"/>
</dbReference>
<dbReference type="NCBIfam" id="TIGR00134">
    <property type="entry name" value="gatE_arch"/>
    <property type="match status" value="1"/>
</dbReference>
<dbReference type="NCBIfam" id="NF003107">
    <property type="entry name" value="PRK04028.1"/>
    <property type="match status" value="1"/>
</dbReference>
<dbReference type="PANTHER" id="PTHR11659">
    <property type="entry name" value="GLUTAMYL-TRNA GLN AMIDOTRANSFERASE SUBUNIT B MITOCHONDRIAL AND PROKARYOTIC PET112-RELATED"/>
    <property type="match status" value="1"/>
</dbReference>
<dbReference type="PANTHER" id="PTHR11659:SF2">
    <property type="entry name" value="GLUTAMYL-TRNA(GLN) AMIDOTRANSFERASE SUBUNIT E"/>
    <property type="match status" value="1"/>
</dbReference>
<dbReference type="Pfam" id="PF02938">
    <property type="entry name" value="GAD"/>
    <property type="match status" value="1"/>
</dbReference>
<dbReference type="Pfam" id="PF02934">
    <property type="entry name" value="GatB_N"/>
    <property type="match status" value="1"/>
</dbReference>
<dbReference type="Pfam" id="PF02637">
    <property type="entry name" value="GatB_Yqey"/>
    <property type="match status" value="1"/>
</dbReference>
<dbReference type="SMART" id="SM00845">
    <property type="entry name" value="GatB_Yqey"/>
    <property type="match status" value="1"/>
</dbReference>
<dbReference type="SUPFAM" id="SSF55261">
    <property type="entry name" value="GAD domain-like"/>
    <property type="match status" value="1"/>
</dbReference>
<dbReference type="SUPFAM" id="SSF89095">
    <property type="entry name" value="GatB/YqeY motif"/>
    <property type="match status" value="1"/>
</dbReference>
<dbReference type="SUPFAM" id="SSF55931">
    <property type="entry name" value="Glutamine synthetase/guanido kinase"/>
    <property type="match status" value="1"/>
</dbReference>
<dbReference type="PROSITE" id="PS01234">
    <property type="entry name" value="GATB"/>
    <property type="match status" value="1"/>
</dbReference>
<protein>
    <recommendedName>
        <fullName evidence="1">Glutamyl-tRNA(Gln) amidotransferase subunit E</fullName>
        <shortName evidence="1">Glu-ADT subunit E</shortName>
        <ecNumber evidence="1">6.3.5.-</ecNumber>
    </recommendedName>
</protein>
<gene>
    <name evidence="1" type="primary">gatE</name>
    <name type="ordered locus">PYRAB06990</name>
    <name type="ORF">PAB1902</name>
</gene>
<organism>
    <name type="scientific">Pyrococcus abyssi (strain GE5 / Orsay)</name>
    <dbReference type="NCBI Taxonomy" id="272844"/>
    <lineage>
        <taxon>Archaea</taxon>
        <taxon>Methanobacteriati</taxon>
        <taxon>Methanobacteriota</taxon>
        <taxon>Thermococci</taxon>
        <taxon>Thermococcales</taxon>
        <taxon>Thermococcaceae</taxon>
        <taxon>Pyrococcus</taxon>
    </lineage>
</organism>
<comment type="function">
    <text evidence="1">Allows the formation of correctly charged Gln-tRNA(Gln) through the transamidation of misacylated Glu-tRNA(Gln) in organisms which lack glutaminyl-tRNA synthetase. The reaction takes place in the presence of glutamine and ATP through an activated gamma-phospho-Glu-tRNA(Gln). The GatDE system is specific for glutamate and does not act on aspartate.</text>
</comment>
<comment type="catalytic activity">
    <reaction evidence="1">
        <text>L-glutamyl-tRNA(Gln) + L-glutamine + ATP + H2O = L-glutaminyl-tRNA(Gln) + L-glutamate + ADP + phosphate + H(+)</text>
        <dbReference type="Rhea" id="RHEA:17521"/>
        <dbReference type="Rhea" id="RHEA-COMP:9681"/>
        <dbReference type="Rhea" id="RHEA-COMP:9684"/>
        <dbReference type="ChEBI" id="CHEBI:15377"/>
        <dbReference type="ChEBI" id="CHEBI:15378"/>
        <dbReference type="ChEBI" id="CHEBI:29985"/>
        <dbReference type="ChEBI" id="CHEBI:30616"/>
        <dbReference type="ChEBI" id="CHEBI:43474"/>
        <dbReference type="ChEBI" id="CHEBI:58359"/>
        <dbReference type="ChEBI" id="CHEBI:78520"/>
        <dbReference type="ChEBI" id="CHEBI:78521"/>
        <dbReference type="ChEBI" id="CHEBI:456216"/>
    </reaction>
</comment>
<comment type="subunit">
    <text evidence="1">Heterodimer of GatD and GatE.</text>
</comment>
<comment type="interaction">
    <interactant intactId="EBI-9023893">
        <id>Q9V0U0</id>
    </interactant>
    <interactant intactId="EBI-9023883">
        <id>Q9V0T9</id>
        <label>gatD</label>
    </interactant>
    <organismsDiffer>false</organismsDiffer>
    <experiments>3</experiments>
</comment>
<comment type="similarity">
    <text evidence="1">Belongs to the GatB/GatE family. GatE subfamily.</text>
</comment>
<comment type="sequence caution" evidence="3">
    <conflict type="erroneous initiation">
        <sequence resource="EMBL-CDS" id="CCE70090"/>
    </conflict>
    <text>Truncated N-terminus.</text>
</comment>
<sequence length="633" mass="71876">MMVMTDKFNYEELGLKVGLEIHRQLDTKKLFSPVPSELSDKVEFTFQRRLRPTMSELGEIDPAALEEFKKGRVYVYEGNYELTDLVYMDEEPPRGPDREALEVALQIAYLLNAKPVDEVYYMRKIVIDGSNVSGFQRTAIIATDGKVETPWGAVGIPTICLEEDAARIIERKDKEVIYRLDRLGIPLIEISTTPDIHHPEQAKVVAKFIGDALRATKKVKRGLGTIRQDLNVSIKGGARIEIKGVQELDMIPIIIEREVERQLNLLKIRDELRKRGVKPKDIKEEFYDVTDIFENTKSKIIARVIKKGGKVLAIKLPKFRGLIGREIQPGRRLGTEFADRAKKYVPGIFHIDELPNYGISQEEVNKVIERLNLSEEDAFVLVAAEEEKAKNALREVIKRAREAIEGVPEETRRALPDGNTEYMRPLPGKARMYPETDIPPLRIPDDLKKKIKENLPELPQAKVERYVKEYKLDRSLAQTLVDDERDELFEELVSMGVKPSLAASILVVVLKGLRKEVPIENVTDEHIREAFQLYLEGKIAKEAFEEIFKELARNPSKSAREVAEEKGLTLLSEEEVTRIIEEVIQQNIEVVKAKGMGAMGLIMGRVMAKVRGKADGKLVSQIVRRKLQEISGG</sequence>
<feature type="chain" id="PRO_0000140076" description="Glutamyl-tRNA(Gln) amidotransferase subunit E">
    <location>
        <begin position="1"/>
        <end position="633"/>
    </location>
</feature>
<feature type="region of interest" description="Disordered" evidence="2">
    <location>
        <begin position="414"/>
        <end position="437"/>
    </location>
</feature>
<feature type="turn" evidence="4">
    <location>
        <begin position="10"/>
        <end position="14"/>
    </location>
</feature>
<feature type="strand" evidence="4">
    <location>
        <begin position="17"/>
        <end position="28"/>
    </location>
</feature>
<feature type="strand" evidence="4">
    <location>
        <begin position="44"/>
        <end position="48"/>
    </location>
</feature>
<feature type="helix" evidence="4">
    <location>
        <begin position="62"/>
        <end position="69"/>
    </location>
</feature>
<feature type="strand" evidence="4">
    <location>
        <begin position="73"/>
        <end position="78"/>
    </location>
</feature>
<feature type="turn" evidence="4">
    <location>
        <begin position="80"/>
        <end position="82"/>
    </location>
</feature>
<feature type="helix" evidence="4">
    <location>
        <begin position="85"/>
        <end position="87"/>
    </location>
</feature>
<feature type="helix" evidence="4">
    <location>
        <begin position="98"/>
        <end position="110"/>
    </location>
</feature>
<feature type="strand" evidence="4">
    <location>
        <begin position="117"/>
        <end position="119"/>
    </location>
</feature>
<feature type="strand" evidence="4">
    <location>
        <begin position="122"/>
        <end position="125"/>
    </location>
</feature>
<feature type="strand" evidence="4">
    <location>
        <begin position="127"/>
        <end position="131"/>
    </location>
</feature>
<feature type="strand" evidence="4">
    <location>
        <begin position="134"/>
        <end position="138"/>
    </location>
</feature>
<feature type="strand" evidence="4">
    <location>
        <begin position="140"/>
        <end position="147"/>
    </location>
</feature>
<feature type="strand" evidence="4">
    <location>
        <begin position="154"/>
        <end position="163"/>
    </location>
</feature>
<feature type="strand" evidence="4">
    <location>
        <begin position="167"/>
        <end position="172"/>
    </location>
</feature>
<feature type="strand" evidence="4">
    <location>
        <begin position="175"/>
        <end position="180"/>
    </location>
</feature>
<feature type="turn" evidence="4">
    <location>
        <begin position="181"/>
        <end position="184"/>
    </location>
</feature>
<feature type="strand" evidence="4">
    <location>
        <begin position="186"/>
        <end position="191"/>
    </location>
</feature>
<feature type="helix" evidence="4">
    <location>
        <begin position="199"/>
        <end position="215"/>
    </location>
</feature>
<feature type="strand" evidence="4">
    <location>
        <begin position="226"/>
        <end position="232"/>
    </location>
</feature>
<feature type="strand" evidence="4">
    <location>
        <begin position="240"/>
        <end position="243"/>
    </location>
</feature>
<feature type="helix" evidence="4">
    <location>
        <begin position="248"/>
        <end position="250"/>
    </location>
</feature>
<feature type="helix" evidence="4">
    <location>
        <begin position="251"/>
        <end position="275"/>
    </location>
</feature>
<feature type="helix" evidence="4">
    <location>
        <begin position="279"/>
        <end position="281"/>
    </location>
</feature>
<feature type="turn" evidence="4">
    <location>
        <begin position="290"/>
        <end position="295"/>
    </location>
</feature>
<feature type="helix" evidence="4">
    <location>
        <begin position="299"/>
        <end position="306"/>
    </location>
</feature>
<feature type="strand" evidence="4">
    <location>
        <begin position="310"/>
        <end position="313"/>
    </location>
</feature>
<feature type="turn" evidence="4">
    <location>
        <begin position="320"/>
        <end position="322"/>
    </location>
</feature>
<feature type="strand" evidence="4">
    <location>
        <begin position="323"/>
        <end position="328"/>
    </location>
</feature>
<feature type="helix" evidence="4">
    <location>
        <begin position="333"/>
        <end position="341"/>
    </location>
</feature>
<feature type="turn" evidence="4">
    <location>
        <begin position="342"/>
        <end position="344"/>
    </location>
</feature>
<feature type="helix" evidence="4">
    <location>
        <begin position="351"/>
        <end position="353"/>
    </location>
</feature>
<feature type="helix" evidence="4">
    <location>
        <begin position="361"/>
        <end position="370"/>
    </location>
</feature>
<feature type="strand" evidence="4">
    <location>
        <begin position="378"/>
        <end position="385"/>
    </location>
</feature>
<feature type="helix" evidence="4">
    <location>
        <begin position="386"/>
        <end position="405"/>
    </location>
</feature>
<feature type="strand" evidence="4">
    <location>
        <begin position="411"/>
        <end position="414"/>
    </location>
</feature>
<feature type="strand" evidence="4">
    <location>
        <begin position="420"/>
        <end position="424"/>
    </location>
</feature>
<feature type="strand" evidence="4">
    <location>
        <begin position="432"/>
        <end position="434"/>
    </location>
</feature>
<feature type="helix" evidence="4">
    <location>
        <begin position="445"/>
        <end position="452"/>
    </location>
</feature>
<feature type="helix" evidence="4">
    <location>
        <begin position="459"/>
        <end position="467"/>
    </location>
</feature>
<feature type="turn" evidence="4">
    <location>
        <begin position="468"/>
        <end position="470"/>
    </location>
</feature>
<feature type="helix" evidence="4">
    <location>
        <begin position="474"/>
        <end position="482"/>
    </location>
</feature>
<feature type="helix" evidence="4">
    <location>
        <begin position="486"/>
        <end position="494"/>
    </location>
</feature>
<feature type="helix" evidence="4">
    <location>
        <begin position="501"/>
        <end position="508"/>
    </location>
</feature>
<proteinExistence type="evidence at protein level"/>